<dbReference type="EMBL" id="X94343">
    <property type="protein sequence ID" value="CAA64069.1"/>
    <property type="molecule type" value="mRNA"/>
</dbReference>
<dbReference type="RefSeq" id="NP_990389.1">
    <property type="nucleotide sequence ID" value="NM_205058.2"/>
</dbReference>
<dbReference type="SMR" id="Q90845"/>
<dbReference type="FunCoup" id="Q90845">
    <property type="interactions" value="38"/>
</dbReference>
<dbReference type="STRING" id="9031.ENSGALP00000002598"/>
<dbReference type="GlyCosmos" id="Q90845">
    <property type="glycosylation" value="3 sites, No reported glycans"/>
</dbReference>
<dbReference type="GlyGen" id="Q90845">
    <property type="glycosylation" value="3 sites"/>
</dbReference>
<dbReference type="PaxDb" id="9031-ENSGALP00000002598"/>
<dbReference type="Ensembl" id="ENSGALT00010023671.1">
    <property type="protein sequence ID" value="ENSGALP00010013580.1"/>
    <property type="gene ID" value="ENSGALG00010009930.1"/>
</dbReference>
<dbReference type="GeneID" id="395931"/>
<dbReference type="KEGG" id="gga:395931"/>
<dbReference type="CTD" id="2559"/>
<dbReference type="VEuPathDB" id="HostDB:geneid_395931"/>
<dbReference type="eggNOG" id="KOG3642">
    <property type="taxonomic scope" value="Eukaryota"/>
</dbReference>
<dbReference type="GeneTree" id="ENSGT00940000156722"/>
<dbReference type="HOGENOM" id="CLU_010920_2_2_1"/>
<dbReference type="InParanoid" id="Q90845"/>
<dbReference type="OMA" id="DSRYHLK"/>
<dbReference type="OrthoDB" id="8890589at2759"/>
<dbReference type="PhylomeDB" id="Q90845"/>
<dbReference type="TreeFam" id="TF315453"/>
<dbReference type="Reactome" id="R-GGA-977443">
    <property type="pathway name" value="GABA receptor activation"/>
</dbReference>
<dbReference type="PRO" id="PR:Q90845"/>
<dbReference type="Proteomes" id="UP000000539">
    <property type="component" value="Chromosome 13"/>
</dbReference>
<dbReference type="Bgee" id="ENSGALG00000001695">
    <property type="expression patterns" value="Expressed in cerebellum"/>
</dbReference>
<dbReference type="GO" id="GO:0034707">
    <property type="term" value="C:chloride channel complex"/>
    <property type="evidence" value="ECO:0007669"/>
    <property type="project" value="UniProtKB-KW"/>
</dbReference>
<dbReference type="GO" id="GO:0032590">
    <property type="term" value="C:dendrite membrane"/>
    <property type="evidence" value="ECO:0000318"/>
    <property type="project" value="GO_Central"/>
</dbReference>
<dbReference type="GO" id="GO:1902711">
    <property type="term" value="C:GABA-A receptor complex"/>
    <property type="evidence" value="ECO:0000318"/>
    <property type="project" value="GO_Central"/>
</dbReference>
<dbReference type="GO" id="GO:0005886">
    <property type="term" value="C:plasma membrane"/>
    <property type="evidence" value="ECO:0000250"/>
    <property type="project" value="UniProtKB"/>
</dbReference>
<dbReference type="GO" id="GO:0098794">
    <property type="term" value="C:postsynapse"/>
    <property type="evidence" value="ECO:0000318"/>
    <property type="project" value="GO_Central"/>
</dbReference>
<dbReference type="GO" id="GO:0099634">
    <property type="term" value="C:postsynaptic specialization membrane"/>
    <property type="evidence" value="ECO:0000250"/>
    <property type="project" value="UniProtKB"/>
</dbReference>
<dbReference type="GO" id="GO:0004890">
    <property type="term" value="F:GABA-A receptor activity"/>
    <property type="evidence" value="ECO:0007669"/>
    <property type="project" value="InterPro"/>
</dbReference>
<dbReference type="GO" id="GO:0022851">
    <property type="term" value="F:GABA-gated chloride ion channel activity"/>
    <property type="evidence" value="ECO:0000318"/>
    <property type="project" value="GO_Central"/>
</dbReference>
<dbReference type="GO" id="GO:1902476">
    <property type="term" value="P:chloride transmembrane transport"/>
    <property type="evidence" value="ECO:0000318"/>
    <property type="project" value="GO_Central"/>
</dbReference>
<dbReference type="GO" id="GO:0007214">
    <property type="term" value="P:gamma-aminobutyric acid signaling pathway"/>
    <property type="evidence" value="ECO:0000318"/>
    <property type="project" value="GO_Central"/>
</dbReference>
<dbReference type="GO" id="GO:1904862">
    <property type="term" value="P:inhibitory synapse assembly"/>
    <property type="evidence" value="ECO:0000318"/>
    <property type="project" value="GO_Central"/>
</dbReference>
<dbReference type="GO" id="GO:0051932">
    <property type="term" value="P:synaptic transmission, GABAergic"/>
    <property type="evidence" value="ECO:0000318"/>
    <property type="project" value="GO_Central"/>
</dbReference>
<dbReference type="CDD" id="cd19039">
    <property type="entry name" value="LGIC_ECD_GABAAR_A6"/>
    <property type="match status" value="1"/>
</dbReference>
<dbReference type="CDD" id="cd19052">
    <property type="entry name" value="LGIC_TM_GABAAR_alpha"/>
    <property type="match status" value="1"/>
</dbReference>
<dbReference type="FunFam" id="2.70.170.10:FF:000001">
    <property type="entry name" value="Gamma-aminobutyric acid A receptor subunit alpha-2"/>
    <property type="match status" value="1"/>
</dbReference>
<dbReference type="FunFam" id="1.20.58.390:FF:000002">
    <property type="entry name" value="Putative gamma-aminobutyric acid receptor subunit alpha-5"/>
    <property type="match status" value="1"/>
</dbReference>
<dbReference type="Gene3D" id="2.70.170.10">
    <property type="entry name" value="Neurotransmitter-gated ion-channel ligand-binding domain"/>
    <property type="match status" value="1"/>
</dbReference>
<dbReference type="Gene3D" id="1.20.58.390">
    <property type="entry name" value="Neurotransmitter-gated ion-channel transmembrane domain"/>
    <property type="match status" value="1"/>
</dbReference>
<dbReference type="InterPro" id="IPR006028">
    <property type="entry name" value="GABAA/Glycine_rcpt"/>
</dbReference>
<dbReference type="InterPro" id="IPR001390">
    <property type="entry name" value="GABAAa_rcpt"/>
</dbReference>
<dbReference type="InterPro" id="IPR005436">
    <property type="entry name" value="GABBAa6_rcpt"/>
</dbReference>
<dbReference type="InterPro" id="IPR047024">
    <property type="entry name" value="Gabra-1-6_TM"/>
</dbReference>
<dbReference type="InterPro" id="IPR006202">
    <property type="entry name" value="Neur_chan_lig-bd"/>
</dbReference>
<dbReference type="InterPro" id="IPR036734">
    <property type="entry name" value="Neur_chan_lig-bd_sf"/>
</dbReference>
<dbReference type="InterPro" id="IPR006201">
    <property type="entry name" value="Neur_channel"/>
</dbReference>
<dbReference type="InterPro" id="IPR036719">
    <property type="entry name" value="Neuro-gated_channel_TM_sf"/>
</dbReference>
<dbReference type="InterPro" id="IPR038050">
    <property type="entry name" value="Neuro_actylchol_rec"/>
</dbReference>
<dbReference type="InterPro" id="IPR006029">
    <property type="entry name" value="Neurotrans-gated_channel_TM"/>
</dbReference>
<dbReference type="InterPro" id="IPR018000">
    <property type="entry name" value="Neurotransmitter_ion_chnl_CS"/>
</dbReference>
<dbReference type="NCBIfam" id="TIGR00860">
    <property type="entry name" value="LIC"/>
    <property type="match status" value="1"/>
</dbReference>
<dbReference type="PANTHER" id="PTHR18945">
    <property type="entry name" value="NEUROTRANSMITTER GATED ION CHANNEL"/>
    <property type="match status" value="1"/>
</dbReference>
<dbReference type="Pfam" id="PF02931">
    <property type="entry name" value="Neur_chan_LBD"/>
    <property type="match status" value="1"/>
</dbReference>
<dbReference type="Pfam" id="PF02932">
    <property type="entry name" value="Neur_chan_memb"/>
    <property type="match status" value="1"/>
</dbReference>
<dbReference type="PRINTS" id="PR01079">
    <property type="entry name" value="GABAARALPHA"/>
</dbReference>
<dbReference type="PRINTS" id="PR01619">
    <property type="entry name" value="GABAARALPHA6"/>
</dbReference>
<dbReference type="PRINTS" id="PR00253">
    <property type="entry name" value="GABAARECEPTR"/>
</dbReference>
<dbReference type="PRINTS" id="PR00252">
    <property type="entry name" value="NRIONCHANNEL"/>
</dbReference>
<dbReference type="SUPFAM" id="SSF90112">
    <property type="entry name" value="Neurotransmitter-gated ion-channel transmembrane pore"/>
    <property type="match status" value="1"/>
</dbReference>
<dbReference type="SUPFAM" id="SSF63712">
    <property type="entry name" value="Nicotinic receptor ligand binding domain-like"/>
    <property type="match status" value="1"/>
</dbReference>
<dbReference type="PROSITE" id="PS00236">
    <property type="entry name" value="NEUROTR_ION_CHANNEL"/>
    <property type="match status" value="1"/>
</dbReference>
<keyword id="KW-1003">Cell membrane</keyword>
<keyword id="KW-0868">Chloride</keyword>
<keyword id="KW-0869">Chloride channel</keyword>
<keyword id="KW-1015">Disulfide bond</keyword>
<keyword id="KW-0325">Glycoprotein</keyword>
<keyword id="KW-0407">Ion channel</keyword>
<keyword id="KW-0406">Ion transport</keyword>
<keyword id="KW-1071">Ligand-gated ion channel</keyword>
<keyword id="KW-0472">Membrane</keyword>
<keyword id="KW-0628">Postsynaptic cell membrane</keyword>
<keyword id="KW-0675">Receptor</keyword>
<keyword id="KW-1185">Reference proteome</keyword>
<keyword id="KW-0732">Signal</keyword>
<keyword id="KW-0770">Synapse</keyword>
<keyword id="KW-0812">Transmembrane</keyword>
<keyword id="KW-1133">Transmembrane helix</keyword>
<keyword id="KW-0813">Transport</keyword>
<name>GBRA6_CHICK</name>
<protein>
    <recommendedName>
        <fullName evidence="9">Gamma-aminobutyric acid receptor subunit alpha-6</fullName>
    </recommendedName>
    <alternativeName>
        <fullName>GABA(A) receptor subunit alpha-6</fullName>
        <shortName>GABAAR subunit alpha-6</shortName>
    </alternativeName>
</protein>
<reference key="1">
    <citation type="journal article" date="1996" name="J. Neurochem.">
        <title>Conservation of gamma-aminobutyric acid type A receptor alpha 6 subunit gene expression in cerebellar granule cells.</title>
        <authorList>
            <person name="Bahn S."/>
            <person name="Harvey R.J."/>
            <person name="Darlison M.G."/>
            <person name="Wisden W."/>
        </authorList>
    </citation>
    <scope>NUCLEOTIDE SEQUENCE [MRNA]</scope>
    <scope>TISSUE SPECIFICITY</scope>
    <source>
        <tissue>Embryonic brain</tissue>
    </source>
</reference>
<proteinExistence type="evidence at transcript level"/>
<sequence>MALLIAWVCVAVSIEKALGGQGDGGDLYSENITRILDKLLDGYDNRLRPGFGGAVTEVKTDIYVTSFGPVSDVEMEYTMDVFFRQTWTDERLKFGGPTEILRLNNLMVSKIWTPDTFFRNGKKSIAHNMTTPNKLFRIMQNGTILYTMRLTINADCPMRLVNFPMDGHACPLKFGSYAYPKSEIIYTWKKGPLHSVEVPQESSSLLQYDLIGQTVSSETIKSNTGEYVIMTVYFHLQRKMGYFMIQIYTPCIMTVILSQVSFWINKESVPARTVFGITTVLTMTTLSISARHSLPKVSYATAMDWFIAVCFAFVFSALIEFAAVNYFTNLQTQRAMRKAARAAALAAALSAATVPAEDEIVSHSDSNCNLKKRVNSVTSQADQSPEASIVSNSASQCQPVSAPPPAPPAPPPVGGTSKIDQYSRILFPVAFAGFNLVYWVVYLSKDTMEFFEPTAMHLRNDHQSN</sequence>
<evidence type="ECO:0000250" key="1">
    <source>
        <dbReference type="UniProtKB" id="P08219"/>
    </source>
</evidence>
<evidence type="ECO:0000250" key="2">
    <source>
        <dbReference type="UniProtKB" id="P14867"/>
    </source>
</evidence>
<evidence type="ECO:0000250" key="3">
    <source>
        <dbReference type="UniProtKB" id="P28472"/>
    </source>
</evidence>
<evidence type="ECO:0000250" key="4">
    <source>
        <dbReference type="UniProtKB" id="P30191"/>
    </source>
</evidence>
<evidence type="ECO:0000250" key="5">
    <source>
        <dbReference type="UniProtKB" id="P62813"/>
    </source>
</evidence>
<evidence type="ECO:0000255" key="6"/>
<evidence type="ECO:0000256" key="7">
    <source>
        <dbReference type="SAM" id="MobiDB-lite"/>
    </source>
</evidence>
<evidence type="ECO:0000269" key="8">
    <source>
    </source>
</evidence>
<evidence type="ECO:0000303" key="9">
    <source>
    </source>
</evidence>
<evidence type="ECO:0000305" key="10"/>
<comment type="function">
    <text evidence="1 2 4">Alpha subunit of the heteropentameric ligand-gated chloride channel gated by gamma-aminobutyric acid (GABA), a major inhibitory neurotransmitter in the brain (By similarity). GABA-gated chloride channels, also named GABA(A) receptors (GABAAR), consist of five subunits arranged around a central pore and contain GABA active binding site(s) located at the alpha and beta subunit interface(s) (By similarity). When activated by GABA, GABAARs selectively allow the flow of chloride anions across the cell membrane down their electrochemical gradient (By similarity).</text>
</comment>
<comment type="catalytic activity">
    <reaction evidence="1">
        <text>chloride(in) = chloride(out)</text>
        <dbReference type="Rhea" id="RHEA:29823"/>
        <dbReference type="ChEBI" id="CHEBI:17996"/>
    </reaction>
</comment>
<comment type="subunit">
    <text evidence="2">Heteropentamer, formed by a combination of alpha (GABRA1-6), beta (GABRB1-3), gamma (GABRG1-3), delta (GABRD), epsilon (GABRE), rho (GABRR1-3), pi (GABRP) and theta (GABRQ) chains, each subunit exhibiting distinct physiological and pharmacological properties.</text>
</comment>
<comment type="subcellular location">
    <subcellularLocation>
        <location evidence="4">Postsynaptic cell membrane</location>
        <topology evidence="6">Multi-pass membrane protein</topology>
    </subcellularLocation>
    <subcellularLocation>
        <location evidence="4">Cell membrane</location>
        <topology evidence="6">Multi-pass membrane protein</topology>
    </subcellularLocation>
</comment>
<comment type="tissue specificity">
    <text evidence="8">Expressed in brain, in cerebellar granule cells.</text>
</comment>
<comment type="domain">
    <text evidence="2">GABAARs subunits share a common topological structure: a peptide sequence made up of a long extracellular N-terminal, four transmembrane domains, intracellular or cytoplasmic domain located between the third and the fourth transmembrane domains.</text>
</comment>
<comment type="similarity">
    <text evidence="10">Belongs to the ligand-gated ion channel (TC 1.A.9) family. Gamma-aminobutyric acid receptor (TC 1.A.9.5) subfamily. GABRA6 sub-subfamily.</text>
</comment>
<accession>Q90845</accession>
<organism>
    <name type="scientific">Gallus gallus</name>
    <name type="common">Chicken</name>
    <dbReference type="NCBI Taxonomy" id="9031"/>
    <lineage>
        <taxon>Eukaryota</taxon>
        <taxon>Metazoa</taxon>
        <taxon>Chordata</taxon>
        <taxon>Craniata</taxon>
        <taxon>Vertebrata</taxon>
        <taxon>Euteleostomi</taxon>
        <taxon>Archelosauria</taxon>
        <taxon>Archosauria</taxon>
        <taxon>Dinosauria</taxon>
        <taxon>Saurischia</taxon>
        <taxon>Theropoda</taxon>
        <taxon>Coelurosauria</taxon>
        <taxon>Aves</taxon>
        <taxon>Neognathae</taxon>
        <taxon>Galloanserae</taxon>
        <taxon>Galliformes</taxon>
        <taxon>Phasianidae</taxon>
        <taxon>Phasianinae</taxon>
        <taxon>Gallus</taxon>
    </lineage>
</organism>
<gene>
    <name type="primary">GABRA6</name>
</gene>
<feature type="signal peptide" evidence="6">
    <location>
        <begin position="1"/>
        <end position="19"/>
    </location>
</feature>
<feature type="chain" id="PRO_0000000450" description="Gamma-aminobutyric acid receptor subunit alpha-6">
    <location>
        <begin position="20"/>
        <end position="465"/>
    </location>
</feature>
<feature type="topological domain" description="Extracellular" evidence="10">
    <location>
        <begin position="20"/>
        <end position="243"/>
    </location>
</feature>
<feature type="transmembrane region" description="Helical" evidence="6">
    <location>
        <begin position="244"/>
        <end position="264"/>
    </location>
</feature>
<feature type="topological domain" description="Cytoplasmic" evidence="10">
    <location>
        <begin position="265"/>
        <end position="270"/>
    </location>
</feature>
<feature type="transmembrane region" description="Helical" evidence="6">
    <location>
        <begin position="271"/>
        <end position="290"/>
    </location>
</feature>
<feature type="topological domain" description="Extracellular" evidence="10">
    <location>
        <begin position="291"/>
        <end position="304"/>
    </location>
</feature>
<feature type="transmembrane region" description="Helical" evidence="6">
    <location>
        <begin position="305"/>
        <end position="325"/>
    </location>
</feature>
<feature type="topological domain" description="Cytoplasmic" evidence="10">
    <location>
        <begin position="326"/>
        <end position="424"/>
    </location>
</feature>
<feature type="transmembrane region" description="Helical" evidence="6">
    <location>
        <begin position="425"/>
        <end position="445"/>
    </location>
</feature>
<feature type="topological domain" description="Extracellular" evidence="10">
    <location>
        <begin position="446"/>
        <end position="465"/>
    </location>
</feature>
<feature type="region of interest" description="Disordered" evidence="7">
    <location>
        <begin position="392"/>
        <end position="415"/>
    </location>
</feature>
<feature type="compositionally biased region" description="Pro residues" evidence="7">
    <location>
        <begin position="401"/>
        <end position="413"/>
    </location>
</feature>
<feature type="binding site" evidence="2">
    <location>
        <position position="84"/>
    </location>
    <ligand>
        <name>4-aminobutanoate</name>
        <dbReference type="ChEBI" id="CHEBI:59888"/>
        <note>ligand shared with the neighboring beta subunit</note>
    </ligand>
</feature>
<feature type="binding site" evidence="5">
    <location>
        <position position="147"/>
    </location>
    <ligand>
        <name>4-aminobutanoate</name>
        <dbReference type="ChEBI" id="CHEBI:59888"/>
        <note>ligand shared with the neighboring beta subunit</note>
    </ligand>
</feature>
<feature type="glycosylation site" description="N-linked (GlcNAc...) asparagine" evidence="6">
    <location>
        <position position="31"/>
    </location>
</feature>
<feature type="glycosylation site" description="N-linked (GlcNAc...) asparagine" evidence="6">
    <location>
        <position position="128"/>
    </location>
</feature>
<feature type="glycosylation site" description="N-linked (GlcNAc...) asparagine" evidence="6">
    <location>
        <position position="141"/>
    </location>
</feature>
<feature type="disulfide bond" evidence="3">
    <location>
        <begin position="156"/>
        <end position="170"/>
    </location>
</feature>